<keyword id="KW-0238">DNA-binding</keyword>
<keyword id="KW-0539">Nucleus</keyword>
<keyword id="KW-1185">Reference proteome</keyword>
<keyword id="KW-0677">Repeat</keyword>
<keyword id="KW-0804">Transcription</keyword>
<keyword id="KW-0805">Transcription regulation</keyword>
<accession>F4IQL7</accession>
<accession>Q9SHV3</accession>
<proteinExistence type="inferred from homology"/>
<feature type="chain" id="PRO_0000412839" description="B3 domain-containing protein REM-like 2">
    <location>
        <begin position="1"/>
        <end position="375"/>
    </location>
</feature>
<feature type="DNA-binding region" description="TF-B3 1" evidence="1">
    <location>
        <begin position="51"/>
        <end position="147"/>
    </location>
</feature>
<feature type="DNA-binding region" description="TF-B3 2" evidence="1">
    <location>
        <begin position="131"/>
        <end position="226"/>
    </location>
</feature>
<feature type="DNA-binding region" description="TF-B3 3" evidence="1">
    <location>
        <begin position="277"/>
        <end position="375"/>
    </location>
</feature>
<sequence>MLFNVSACDIRDKPMPSNNDINKIDQLERVKKVRKNSSQSEAGSSSSGNSSFVALVKASNLKEDALYLPQDCTSSNGLNKKCRKIFLTDGGDRSWEMDLKFDKNLDSFCITRGWRHFCDENGKKLPNQERFVTVRLVPDCLRNKRLYLSRRFLKNNGLGEPKMVTLVGTDGTRILANLLRESTGRMSLGRGWVDFAKANRLKIGEYFTLESIWENDSPILSLYGTNTSKSDKRKRRENFPVACEKEYVSTEARNRNEPEKDKNTEEMINQASLSENRLVITLVPEDVKAGMLRLPSHFMKANGIDKVGKIYMLGINEMEWWWGDLLTRDGIVSVGCGWRYFCESNGVKIGKSFTLECMYKYDTRPVFKFCPKSGK</sequence>
<dbReference type="EMBL" id="AC007266">
    <property type="protein sequence ID" value="AAD26893.1"/>
    <property type="status" value="ALT_SEQ"/>
    <property type="molecule type" value="Genomic_DNA"/>
</dbReference>
<dbReference type="EMBL" id="CP002685">
    <property type="protein sequence ID" value="AEC07619.1"/>
    <property type="molecule type" value="Genomic_DNA"/>
</dbReference>
<dbReference type="RefSeq" id="NP_001154532.1">
    <property type="nucleotide sequence ID" value="NM_001161060.1"/>
</dbReference>
<dbReference type="SMR" id="F4IQL7"/>
<dbReference type="STRING" id="3702.F4IQL7"/>
<dbReference type="PaxDb" id="3702-AT2G24696.1"/>
<dbReference type="EnsemblPlants" id="AT2G24696.1">
    <property type="protein sequence ID" value="AT2G24696.1"/>
    <property type="gene ID" value="AT2G24696"/>
</dbReference>
<dbReference type="GeneID" id="3768436"/>
<dbReference type="Gramene" id="AT2G24696.1">
    <property type="protein sequence ID" value="AT2G24696.1"/>
    <property type="gene ID" value="AT2G24696"/>
</dbReference>
<dbReference type="KEGG" id="ath:AT2G24696"/>
<dbReference type="Araport" id="AT2G24696"/>
<dbReference type="TAIR" id="AT2G24696"/>
<dbReference type="HOGENOM" id="CLU_014437_3_0_1"/>
<dbReference type="InParanoid" id="F4IQL7"/>
<dbReference type="OMA" id="ACDIRDK"/>
<dbReference type="PRO" id="PR:F4IQL7"/>
<dbReference type="Proteomes" id="UP000006548">
    <property type="component" value="Chromosome 2"/>
</dbReference>
<dbReference type="ExpressionAtlas" id="F4IQL7">
    <property type="expression patterns" value="baseline and differential"/>
</dbReference>
<dbReference type="GO" id="GO:0005634">
    <property type="term" value="C:nucleus"/>
    <property type="evidence" value="ECO:0007669"/>
    <property type="project" value="UniProtKB-SubCell"/>
</dbReference>
<dbReference type="GO" id="GO:0003677">
    <property type="term" value="F:DNA binding"/>
    <property type="evidence" value="ECO:0007669"/>
    <property type="project" value="UniProtKB-KW"/>
</dbReference>
<dbReference type="CDD" id="cd10017">
    <property type="entry name" value="B3_DNA"/>
    <property type="match status" value="3"/>
</dbReference>
<dbReference type="Gene3D" id="2.40.330.10">
    <property type="entry name" value="DNA-binding pseudobarrel domain"/>
    <property type="match status" value="3"/>
</dbReference>
<dbReference type="InterPro" id="IPR003340">
    <property type="entry name" value="B3_DNA-bd"/>
</dbReference>
<dbReference type="InterPro" id="IPR015300">
    <property type="entry name" value="DNA-bd_pseudobarrel_sf"/>
</dbReference>
<dbReference type="InterPro" id="IPR039218">
    <property type="entry name" value="REM_fam"/>
</dbReference>
<dbReference type="PANTHER" id="PTHR31674:SF41">
    <property type="entry name" value="B3 DOMAIN-CONTAINING PROTEIN REM-LIKE 1-RELATED"/>
    <property type="match status" value="1"/>
</dbReference>
<dbReference type="PANTHER" id="PTHR31674">
    <property type="entry name" value="B3 DOMAIN-CONTAINING PROTEIN REM-LIKE 3-RELATED"/>
    <property type="match status" value="1"/>
</dbReference>
<dbReference type="Pfam" id="PF02362">
    <property type="entry name" value="B3"/>
    <property type="match status" value="3"/>
</dbReference>
<dbReference type="SMART" id="SM01019">
    <property type="entry name" value="B3"/>
    <property type="match status" value="3"/>
</dbReference>
<dbReference type="SUPFAM" id="SSF101936">
    <property type="entry name" value="DNA-binding pseudobarrel domain"/>
    <property type="match status" value="3"/>
</dbReference>
<dbReference type="PROSITE" id="PS50863">
    <property type="entry name" value="B3"/>
    <property type="match status" value="3"/>
</dbReference>
<evidence type="ECO:0000255" key="1">
    <source>
        <dbReference type="PROSITE-ProRule" id="PRU00326"/>
    </source>
</evidence>
<evidence type="ECO:0000305" key="2"/>
<reference key="1">
    <citation type="journal article" date="1999" name="Nature">
        <title>Sequence and analysis of chromosome 2 of the plant Arabidopsis thaliana.</title>
        <authorList>
            <person name="Lin X."/>
            <person name="Kaul S."/>
            <person name="Rounsley S.D."/>
            <person name="Shea T.P."/>
            <person name="Benito M.-I."/>
            <person name="Town C.D."/>
            <person name="Fujii C.Y."/>
            <person name="Mason T.M."/>
            <person name="Bowman C.L."/>
            <person name="Barnstead M.E."/>
            <person name="Feldblyum T.V."/>
            <person name="Buell C.R."/>
            <person name="Ketchum K.A."/>
            <person name="Lee J.J."/>
            <person name="Ronning C.M."/>
            <person name="Koo H.L."/>
            <person name="Moffat K.S."/>
            <person name="Cronin L.A."/>
            <person name="Shen M."/>
            <person name="Pai G."/>
            <person name="Van Aken S."/>
            <person name="Umayam L."/>
            <person name="Tallon L.J."/>
            <person name="Gill J.E."/>
            <person name="Adams M.D."/>
            <person name="Carrera A.J."/>
            <person name="Creasy T.H."/>
            <person name="Goodman H.M."/>
            <person name="Somerville C.R."/>
            <person name="Copenhaver G.P."/>
            <person name="Preuss D."/>
            <person name="Nierman W.C."/>
            <person name="White O."/>
            <person name="Eisen J.A."/>
            <person name="Salzberg S.L."/>
            <person name="Fraser C.M."/>
            <person name="Venter J.C."/>
        </authorList>
    </citation>
    <scope>NUCLEOTIDE SEQUENCE [LARGE SCALE GENOMIC DNA]</scope>
    <source>
        <strain>cv. Columbia</strain>
    </source>
</reference>
<reference key="2">
    <citation type="journal article" date="2017" name="Plant J.">
        <title>Araport11: a complete reannotation of the Arabidopsis thaliana reference genome.</title>
        <authorList>
            <person name="Cheng C.Y."/>
            <person name="Krishnakumar V."/>
            <person name="Chan A.P."/>
            <person name="Thibaud-Nissen F."/>
            <person name="Schobel S."/>
            <person name="Town C.D."/>
        </authorList>
    </citation>
    <scope>GENOME REANNOTATION</scope>
    <source>
        <strain>cv. Columbia</strain>
    </source>
</reference>
<reference key="3">
    <citation type="journal article" date="2008" name="Trends Plant Sci.">
        <title>The plant B3 superfamily.</title>
        <authorList>
            <person name="Swaminathan K."/>
            <person name="Peterson K."/>
            <person name="Jack T."/>
        </authorList>
    </citation>
    <scope>GENE FAMILY</scope>
</reference>
<comment type="subcellular location">
    <subcellularLocation>
        <location evidence="1">Nucleus</location>
    </subcellularLocation>
</comment>
<comment type="sequence caution" evidence="2">
    <conflict type="erroneous gene model prediction">
        <sequence resource="EMBL-CDS" id="AAD26893"/>
    </conflict>
    <text>The predicted gene At2g24700 has been split into 2 genes: At2g24696 and At2g24700.</text>
</comment>
<name>REML2_ARATH</name>
<organism>
    <name type="scientific">Arabidopsis thaliana</name>
    <name type="common">Mouse-ear cress</name>
    <dbReference type="NCBI Taxonomy" id="3702"/>
    <lineage>
        <taxon>Eukaryota</taxon>
        <taxon>Viridiplantae</taxon>
        <taxon>Streptophyta</taxon>
        <taxon>Embryophyta</taxon>
        <taxon>Tracheophyta</taxon>
        <taxon>Spermatophyta</taxon>
        <taxon>Magnoliopsida</taxon>
        <taxon>eudicotyledons</taxon>
        <taxon>Gunneridae</taxon>
        <taxon>Pentapetalae</taxon>
        <taxon>rosids</taxon>
        <taxon>malvids</taxon>
        <taxon>Brassicales</taxon>
        <taxon>Brassicaceae</taxon>
        <taxon>Camelineae</taxon>
        <taxon>Arabidopsis</taxon>
    </lineage>
</organism>
<gene>
    <name type="ordered locus">At2g24696</name>
    <name type="ORF">F27A10.1</name>
</gene>
<protein>
    <recommendedName>
        <fullName>B3 domain-containing protein REM-like 2</fullName>
    </recommendedName>
    <alternativeName>
        <fullName>Protein REPRODUCTIVE MERISTEM-like 2</fullName>
    </alternativeName>
</protein>